<keyword id="KW-0067">ATP-binding</keyword>
<keyword id="KW-0077">Bacteriochlorophyll biosynthesis</keyword>
<keyword id="KW-0149">Chlorophyll biosynthesis</keyword>
<keyword id="KW-0436">Ligase</keyword>
<keyword id="KW-0547">Nucleotide-binding</keyword>
<keyword id="KW-0602">Photosynthesis</keyword>
<keyword id="KW-1185">Reference proteome</keyword>
<sequence>MIAFTDIVGMDLAKQALMLLAVDPSLGGVVIPSTVGSGKSTLARAFADILPEGTPFVELPLNVTEDRLIGGVDLEATLASGQRVVQHGVLSKAHKGVLYVDSLSLLDSSAVSHIMDAMSRGAVIVEREGLSEVHPADFMLVGTYDPSDGEVRMGLLDRIGIIVPFTPVNDYRARKQIVSLVMGTRNEEDTQDELRMLRGIIGAAREQLHHVSITNEQIKGLIQTAISLGVEGNRVDIFAIRAAIANAALNQRTEVDDEDLKLAMKLVLVPRATRMPEREPNPEEMAQDEPPPQEEQPQDEAEDQNAPPDEADSDADEEQEETPDMIEELMMDAVETELPDNILNISLASKKKAKSGSRGEALNNKRGRFVRSQPGEIKSGKVALIPTLISAAPWQASRKAEQAKKGIKSTAALIIGKDDIKIKRFRDKSGTLFIFMVDASGSMALNRMRQAKGAVASLLQNAYVHRDQVSLISFRGKQAQVLLPPSQSVDRAKRELDVLPTGGGTPLASALLTGWETAKQARAKGITQIMFVMITDGRGNIPLGAAYDPNATKASKEELEKEVEALALSIQADGIASIVVDTQMNYLSRGEAPKLAQKLGGRYFYLPNAKAEQIVEAALS</sequence>
<dbReference type="EC" id="6.6.1.1"/>
<dbReference type="EMBL" id="AY005135">
    <property type="protein sequence ID" value="AAG12406.1"/>
    <property type="molecule type" value="Genomic_DNA"/>
</dbReference>
<dbReference type="EMBL" id="AE006470">
    <property type="protein sequence ID" value="AAM72526.1"/>
    <property type="molecule type" value="Genomic_DNA"/>
</dbReference>
<dbReference type="RefSeq" id="NP_662184.1">
    <property type="nucleotide sequence ID" value="NC_002932.3"/>
</dbReference>
<dbReference type="RefSeq" id="WP_010932965.1">
    <property type="nucleotide sequence ID" value="NC_002932.3"/>
</dbReference>
<dbReference type="SMR" id="Q93SW0"/>
<dbReference type="STRING" id="194439.CT1296"/>
<dbReference type="EnsemblBacteria" id="AAM72526">
    <property type="protein sequence ID" value="AAM72526"/>
    <property type="gene ID" value="CT1296"/>
</dbReference>
<dbReference type="KEGG" id="cte:CT1296"/>
<dbReference type="PATRIC" id="fig|194439.7.peg.1181"/>
<dbReference type="eggNOG" id="COG1239">
    <property type="taxonomic scope" value="Bacteria"/>
</dbReference>
<dbReference type="eggNOG" id="COG1240">
    <property type="taxonomic scope" value="Bacteria"/>
</dbReference>
<dbReference type="HOGENOM" id="CLU_016684_6_2_10"/>
<dbReference type="OrthoDB" id="9775079at2"/>
<dbReference type="UniPathway" id="UPA00669"/>
<dbReference type="Proteomes" id="UP000001007">
    <property type="component" value="Chromosome"/>
</dbReference>
<dbReference type="GO" id="GO:0005524">
    <property type="term" value="F:ATP binding"/>
    <property type="evidence" value="ECO:0007669"/>
    <property type="project" value="UniProtKB-KW"/>
</dbReference>
<dbReference type="GO" id="GO:0016887">
    <property type="term" value="F:ATP hydrolysis activity"/>
    <property type="evidence" value="ECO:0007669"/>
    <property type="project" value="InterPro"/>
</dbReference>
<dbReference type="GO" id="GO:0016851">
    <property type="term" value="F:magnesium chelatase activity"/>
    <property type="evidence" value="ECO:0007669"/>
    <property type="project" value="UniProtKB-EC"/>
</dbReference>
<dbReference type="GO" id="GO:0030494">
    <property type="term" value="P:bacteriochlorophyll biosynthetic process"/>
    <property type="evidence" value="ECO:0007669"/>
    <property type="project" value="UniProtKB-UniPathway"/>
</dbReference>
<dbReference type="GO" id="GO:0015979">
    <property type="term" value="P:photosynthesis"/>
    <property type="evidence" value="ECO:0007669"/>
    <property type="project" value="UniProtKB-KW"/>
</dbReference>
<dbReference type="CDD" id="cd00009">
    <property type="entry name" value="AAA"/>
    <property type="match status" value="1"/>
</dbReference>
<dbReference type="CDD" id="cd01451">
    <property type="entry name" value="vWA_Magnesium_chelatase"/>
    <property type="match status" value="1"/>
</dbReference>
<dbReference type="Gene3D" id="1.10.8.80">
    <property type="entry name" value="Magnesium chelatase subunit I, C-Terminal domain"/>
    <property type="match status" value="1"/>
</dbReference>
<dbReference type="Gene3D" id="3.40.50.300">
    <property type="entry name" value="P-loop containing nucleotide triphosphate hydrolases"/>
    <property type="match status" value="1"/>
</dbReference>
<dbReference type="Gene3D" id="3.40.50.410">
    <property type="entry name" value="von Willebrand factor, type A domain"/>
    <property type="match status" value="1"/>
</dbReference>
<dbReference type="InterPro" id="IPR003593">
    <property type="entry name" value="AAA+_ATPase"/>
</dbReference>
<dbReference type="InterPro" id="IPR041702">
    <property type="entry name" value="BchD/ChlD_VWA"/>
</dbReference>
<dbReference type="InterPro" id="IPR041628">
    <property type="entry name" value="ChlI/MoxR_AAA_lid"/>
</dbReference>
<dbReference type="InterPro" id="IPR011776">
    <property type="entry name" value="Mg_chelatase_ATPase-dsu"/>
</dbReference>
<dbReference type="InterPro" id="IPR000523">
    <property type="entry name" value="Mg_chelatse_chII-like_cat_dom"/>
</dbReference>
<dbReference type="InterPro" id="IPR027417">
    <property type="entry name" value="P-loop_NTPase"/>
</dbReference>
<dbReference type="InterPro" id="IPR002035">
    <property type="entry name" value="VWF_A"/>
</dbReference>
<dbReference type="InterPro" id="IPR036465">
    <property type="entry name" value="vWFA_dom_sf"/>
</dbReference>
<dbReference type="NCBIfam" id="TIGR02031">
    <property type="entry name" value="BchD-ChlD"/>
    <property type="match status" value="1"/>
</dbReference>
<dbReference type="PANTHER" id="PTHR43473">
    <property type="entry name" value="MAGNESIUM-CHELATASE SUBUNIT CHLD, CHLOROPLASTIC"/>
    <property type="match status" value="1"/>
</dbReference>
<dbReference type="PANTHER" id="PTHR43473:SF2">
    <property type="entry name" value="MAGNESIUM-CHELATASE SUBUNIT CHLD, CHLOROPLASTIC"/>
    <property type="match status" value="1"/>
</dbReference>
<dbReference type="Pfam" id="PF17863">
    <property type="entry name" value="AAA_lid_2"/>
    <property type="match status" value="1"/>
</dbReference>
<dbReference type="Pfam" id="PF01078">
    <property type="entry name" value="Mg_chelatase"/>
    <property type="match status" value="1"/>
</dbReference>
<dbReference type="Pfam" id="PF13519">
    <property type="entry name" value="VWA_2"/>
    <property type="match status" value="1"/>
</dbReference>
<dbReference type="SMART" id="SM00382">
    <property type="entry name" value="AAA"/>
    <property type="match status" value="1"/>
</dbReference>
<dbReference type="SMART" id="SM00327">
    <property type="entry name" value="VWA"/>
    <property type="match status" value="1"/>
</dbReference>
<dbReference type="SUPFAM" id="SSF52540">
    <property type="entry name" value="P-loop containing nucleoside triphosphate hydrolases"/>
    <property type="match status" value="1"/>
</dbReference>
<dbReference type="SUPFAM" id="SSF53300">
    <property type="entry name" value="vWA-like"/>
    <property type="match status" value="1"/>
</dbReference>
<dbReference type="PROSITE" id="PS50234">
    <property type="entry name" value="VWFA"/>
    <property type="match status" value="1"/>
</dbReference>
<name>BCHD_CHLTE</name>
<feature type="chain" id="PRO_0000206849" description="Magnesium-chelatase 67 kDa subunit">
    <location>
        <begin position="1"/>
        <end position="620"/>
    </location>
</feature>
<feature type="domain" description="VWFA" evidence="2">
    <location>
        <begin position="432"/>
        <end position="620"/>
    </location>
</feature>
<feature type="region of interest" description="Disordered" evidence="3">
    <location>
        <begin position="272"/>
        <end position="322"/>
    </location>
</feature>
<feature type="compositionally biased region" description="Acidic residues" evidence="3">
    <location>
        <begin position="296"/>
        <end position="322"/>
    </location>
</feature>
<feature type="binding site" evidence="1">
    <location>
        <begin position="33"/>
        <end position="40"/>
    </location>
    <ligand>
        <name>ATP</name>
        <dbReference type="ChEBI" id="CHEBI:30616"/>
    </ligand>
</feature>
<accession>Q93SW0</accession>
<organism>
    <name type="scientific">Chlorobaculum tepidum (strain ATCC 49652 / DSM 12025 / NBRC 103806 / TLS)</name>
    <name type="common">Chlorobium tepidum</name>
    <dbReference type="NCBI Taxonomy" id="194439"/>
    <lineage>
        <taxon>Bacteria</taxon>
        <taxon>Pseudomonadati</taxon>
        <taxon>Chlorobiota</taxon>
        <taxon>Chlorobiia</taxon>
        <taxon>Chlorobiales</taxon>
        <taxon>Chlorobiaceae</taxon>
        <taxon>Chlorobaculum</taxon>
    </lineage>
</organism>
<evidence type="ECO:0000255" key="1"/>
<evidence type="ECO:0000255" key="2">
    <source>
        <dbReference type="PROSITE-ProRule" id="PRU00219"/>
    </source>
</evidence>
<evidence type="ECO:0000256" key="3">
    <source>
        <dbReference type="SAM" id="MobiDB-lite"/>
    </source>
</evidence>
<evidence type="ECO:0000305" key="4"/>
<protein>
    <recommendedName>
        <fullName>Magnesium-chelatase 67 kDa subunit</fullName>
        <shortName>Mg-chelatase subunit D</shortName>
        <ecNumber>6.6.1.1</ecNumber>
    </recommendedName>
    <alternativeName>
        <fullName>Mg-protoporphyrin IX chelatase</fullName>
    </alternativeName>
</protein>
<comment type="function">
    <text>Involved in bacteriochlorophyll biosynthesis; introduces a magnesium ion into protoporphyrin IX to yield Mg-protoporphyrin IX.</text>
</comment>
<comment type="catalytic activity">
    <reaction>
        <text>protoporphyrin IX + Mg(2+) + ATP + H2O = Mg-protoporphyrin IX + ADP + phosphate + 3 H(+)</text>
        <dbReference type="Rhea" id="RHEA:13961"/>
        <dbReference type="ChEBI" id="CHEBI:15377"/>
        <dbReference type="ChEBI" id="CHEBI:15378"/>
        <dbReference type="ChEBI" id="CHEBI:18420"/>
        <dbReference type="ChEBI" id="CHEBI:30616"/>
        <dbReference type="ChEBI" id="CHEBI:43474"/>
        <dbReference type="ChEBI" id="CHEBI:57306"/>
        <dbReference type="ChEBI" id="CHEBI:60492"/>
        <dbReference type="ChEBI" id="CHEBI:456216"/>
        <dbReference type="EC" id="6.6.1.1"/>
    </reaction>
</comment>
<comment type="pathway">
    <text>Porphyrin-containing compound metabolism; bacteriochlorophyll biosynthesis.</text>
</comment>
<comment type="similarity">
    <text evidence="4">Belongs to the Mg-chelatase subunits D/I family.</text>
</comment>
<reference key="1">
    <citation type="journal article" date="2000" name="Science">
        <title>Molecular evidence for the early evolution of photosynthesis.</title>
        <authorList>
            <person name="Xiong J."/>
            <person name="Fischer W.M."/>
            <person name="Inoue K."/>
            <person name="Nakahara M."/>
            <person name="Bauer C.E."/>
        </authorList>
    </citation>
    <scope>NUCLEOTIDE SEQUENCE [GENOMIC DNA]</scope>
</reference>
<reference key="2">
    <citation type="journal article" date="2002" name="Proc. Natl. Acad. Sci. U.S.A.">
        <title>The complete genome sequence of Chlorobium tepidum TLS, a photosynthetic, anaerobic, green-sulfur bacterium.</title>
        <authorList>
            <person name="Eisen J.A."/>
            <person name="Nelson K.E."/>
            <person name="Paulsen I.T."/>
            <person name="Heidelberg J.F."/>
            <person name="Wu M."/>
            <person name="Dodson R.J."/>
            <person name="DeBoy R.T."/>
            <person name="Gwinn M.L."/>
            <person name="Nelson W.C."/>
            <person name="Haft D.H."/>
            <person name="Hickey E.K."/>
            <person name="Peterson J.D."/>
            <person name="Durkin A.S."/>
            <person name="Kolonay J.F."/>
            <person name="Yang F."/>
            <person name="Holt I.E."/>
            <person name="Umayam L.A."/>
            <person name="Mason T.M."/>
            <person name="Brenner M."/>
            <person name="Shea T.P."/>
            <person name="Parksey D.S."/>
            <person name="Nierman W.C."/>
            <person name="Feldblyum T.V."/>
            <person name="Hansen C.L."/>
            <person name="Craven M.B."/>
            <person name="Radune D."/>
            <person name="Vamathevan J.J."/>
            <person name="Khouri H.M."/>
            <person name="White O."/>
            <person name="Gruber T.M."/>
            <person name="Ketchum K.A."/>
            <person name="Venter J.C."/>
            <person name="Tettelin H."/>
            <person name="Bryant D.A."/>
            <person name="Fraser C.M."/>
        </authorList>
    </citation>
    <scope>NUCLEOTIDE SEQUENCE [LARGE SCALE GENOMIC DNA]</scope>
    <source>
        <strain>ATCC 49652 / DSM 12025 / NBRC 103806 / TLS</strain>
    </source>
</reference>
<gene>
    <name type="primary">bchD</name>
    <name type="ordered locus">CT1296</name>
</gene>
<proteinExistence type="inferred from homology"/>